<reference key="1">
    <citation type="journal article" date="2005" name="Nucleic Acids Res.">
        <title>Genome dynamics and diversity of Shigella species, the etiologic agents of bacillary dysentery.</title>
        <authorList>
            <person name="Yang F."/>
            <person name="Yang J."/>
            <person name="Zhang X."/>
            <person name="Chen L."/>
            <person name="Jiang Y."/>
            <person name="Yan Y."/>
            <person name="Tang X."/>
            <person name="Wang J."/>
            <person name="Xiong Z."/>
            <person name="Dong J."/>
            <person name="Xue Y."/>
            <person name="Zhu Y."/>
            <person name="Xu X."/>
            <person name="Sun L."/>
            <person name="Chen S."/>
            <person name="Nie H."/>
            <person name="Peng J."/>
            <person name="Xu J."/>
            <person name="Wang Y."/>
            <person name="Yuan Z."/>
            <person name="Wen Y."/>
            <person name="Yao Z."/>
            <person name="Shen Y."/>
            <person name="Qiang B."/>
            <person name="Hou Y."/>
            <person name="Yu J."/>
            <person name="Jin Q."/>
        </authorList>
    </citation>
    <scope>NUCLEOTIDE SEQUENCE [LARGE SCALE GENOMIC DNA]</scope>
    <source>
        <strain>Ss046</strain>
    </source>
</reference>
<dbReference type="EMBL" id="CP000038">
    <property type="protein sequence ID" value="AAZ89312.1"/>
    <property type="molecule type" value="Genomic_DNA"/>
</dbReference>
<dbReference type="RefSeq" id="WP_000020737.1">
    <property type="nucleotide sequence ID" value="NC_007384.1"/>
</dbReference>
<dbReference type="SMR" id="Q3YYV0"/>
<dbReference type="GeneID" id="93774525"/>
<dbReference type="KEGG" id="ssn:SSON_2690"/>
<dbReference type="HOGENOM" id="CLU_038009_1_2_6"/>
<dbReference type="Proteomes" id="UP000002529">
    <property type="component" value="Chromosome"/>
</dbReference>
<dbReference type="GO" id="GO:0005829">
    <property type="term" value="C:cytosol"/>
    <property type="evidence" value="ECO:0007669"/>
    <property type="project" value="TreeGrafter"/>
</dbReference>
<dbReference type="GO" id="GO:0005886">
    <property type="term" value="C:plasma membrane"/>
    <property type="evidence" value="ECO:0007669"/>
    <property type="project" value="UniProtKB-SubCell"/>
</dbReference>
<dbReference type="GO" id="GO:0005525">
    <property type="term" value="F:GTP binding"/>
    <property type="evidence" value="ECO:0007669"/>
    <property type="project" value="UniProtKB-UniRule"/>
</dbReference>
<dbReference type="GO" id="GO:0003924">
    <property type="term" value="F:GTPase activity"/>
    <property type="evidence" value="ECO:0007669"/>
    <property type="project" value="UniProtKB-UniRule"/>
</dbReference>
<dbReference type="GO" id="GO:0043024">
    <property type="term" value="F:ribosomal small subunit binding"/>
    <property type="evidence" value="ECO:0007669"/>
    <property type="project" value="TreeGrafter"/>
</dbReference>
<dbReference type="GO" id="GO:0070181">
    <property type="term" value="F:small ribosomal subunit rRNA binding"/>
    <property type="evidence" value="ECO:0007669"/>
    <property type="project" value="UniProtKB-UniRule"/>
</dbReference>
<dbReference type="GO" id="GO:0000028">
    <property type="term" value="P:ribosomal small subunit assembly"/>
    <property type="evidence" value="ECO:0007669"/>
    <property type="project" value="TreeGrafter"/>
</dbReference>
<dbReference type="CDD" id="cd04163">
    <property type="entry name" value="Era"/>
    <property type="match status" value="1"/>
</dbReference>
<dbReference type="CDD" id="cd22534">
    <property type="entry name" value="KH-II_Era"/>
    <property type="match status" value="1"/>
</dbReference>
<dbReference type="FunFam" id="3.30.300.20:FF:000003">
    <property type="entry name" value="GTPase Era"/>
    <property type="match status" value="1"/>
</dbReference>
<dbReference type="FunFam" id="3.40.50.300:FF:000094">
    <property type="entry name" value="GTPase Era"/>
    <property type="match status" value="1"/>
</dbReference>
<dbReference type="Gene3D" id="3.30.300.20">
    <property type="match status" value="1"/>
</dbReference>
<dbReference type="Gene3D" id="3.40.50.300">
    <property type="entry name" value="P-loop containing nucleotide triphosphate hydrolases"/>
    <property type="match status" value="1"/>
</dbReference>
<dbReference type="HAMAP" id="MF_00367">
    <property type="entry name" value="GTPase_Era"/>
    <property type="match status" value="1"/>
</dbReference>
<dbReference type="InterPro" id="IPR030388">
    <property type="entry name" value="G_ERA_dom"/>
</dbReference>
<dbReference type="InterPro" id="IPR006073">
    <property type="entry name" value="GTP-bd"/>
</dbReference>
<dbReference type="InterPro" id="IPR005662">
    <property type="entry name" value="GTPase_Era-like"/>
</dbReference>
<dbReference type="InterPro" id="IPR015946">
    <property type="entry name" value="KH_dom-like_a/b"/>
</dbReference>
<dbReference type="InterPro" id="IPR004044">
    <property type="entry name" value="KH_dom_type_2"/>
</dbReference>
<dbReference type="InterPro" id="IPR009019">
    <property type="entry name" value="KH_sf_prok-type"/>
</dbReference>
<dbReference type="InterPro" id="IPR027417">
    <property type="entry name" value="P-loop_NTPase"/>
</dbReference>
<dbReference type="InterPro" id="IPR005225">
    <property type="entry name" value="Small_GTP-bd"/>
</dbReference>
<dbReference type="NCBIfam" id="TIGR00436">
    <property type="entry name" value="era"/>
    <property type="match status" value="1"/>
</dbReference>
<dbReference type="NCBIfam" id="NF000908">
    <property type="entry name" value="PRK00089.1"/>
    <property type="match status" value="1"/>
</dbReference>
<dbReference type="NCBIfam" id="TIGR00231">
    <property type="entry name" value="small_GTP"/>
    <property type="match status" value="1"/>
</dbReference>
<dbReference type="PANTHER" id="PTHR42698">
    <property type="entry name" value="GTPASE ERA"/>
    <property type="match status" value="1"/>
</dbReference>
<dbReference type="PANTHER" id="PTHR42698:SF1">
    <property type="entry name" value="GTPASE ERA, MITOCHONDRIAL"/>
    <property type="match status" value="1"/>
</dbReference>
<dbReference type="Pfam" id="PF07650">
    <property type="entry name" value="KH_2"/>
    <property type="match status" value="1"/>
</dbReference>
<dbReference type="Pfam" id="PF01926">
    <property type="entry name" value="MMR_HSR1"/>
    <property type="match status" value="1"/>
</dbReference>
<dbReference type="SUPFAM" id="SSF52540">
    <property type="entry name" value="P-loop containing nucleoside triphosphate hydrolases"/>
    <property type="match status" value="1"/>
</dbReference>
<dbReference type="SUPFAM" id="SSF54814">
    <property type="entry name" value="Prokaryotic type KH domain (KH-domain type II)"/>
    <property type="match status" value="1"/>
</dbReference>
<dbReference type="PROSITE" id="PS51713">
    <property type="entry name" value="G_ERA"/>
    <property type="match status" value="1"/>
</dbReference>
<dbReference type="PROSITE" id="PS50823">
    <property type="entry name" value="KH_TYPE_2"/>
    <property type="match status" value="1"/>
</dbReference>
<comment type="function">
    <text evidence="1">An essential GTPase that binds both GDP and GTP, with rapid nucleotide exchange. Plays a role in 16S rRNA processing and 30S ribosomal subunit biogenesis and possibly also in cell cycle regulation and energy metabolism.</text>
</comment>
<comment type="subunit">
    <text evidence="1">Monomer.</text>
</comment>
<comment type="subcellular location">
    <subcellularLocation>
        <location>Cytoplasm</location>
    </subcellularLocation>
    <subcellularLocation>
        <location evidence="1">Cell inner membrane</location>
        <topology evidence="1">Peripheral membrane protein</topology>
    </subcellularLocation>
</comment>
<comment type="similarity">
    <text evidence="1 2">Belongs to the TRAFAC class TrmE-Era-EngA-EngB-Septin-like GTPase superfamily. Era GTPase family.</text>
</comment>
<sequence length="301" mass="33796">MSIDKSYCGFIAIVGRPNVGKSTLLNKLLGQKISITSRKAQTTRHRIVGIHTEGAYQAIYVDTPGLHMEEKRAINRLMNKAASSSIGDVELVIFVVEGTRWTPDDEMVLNKLRDGKAPVILAVNKVDNVQEKADLLPHLQFLASQMNFLDIVPISAETGLNVDTIAAIVRKHLPEATHHFPEDYITDRSQRFMASEIIREKLMRFLGAELPYSVTVEIERFVSNERGGYDINGLILVEREGQKKMVIGNKGAKIKTIGIEARKDMQEMFEAPVHLELWVKVKSGWADDERALRSLGYVDDL</sequence>
<organism>
    <name type="scientific">Shigella sonnei (strain Ss046)</name>
    <dbReference type="NCBI Taxonomy" id="300269"/>
    <lineage>
        <taxon>Bacteria</taxon>
        <taxon>Pseudomonadati</taxon>
        <taxon>Pseudomonadota</taxon>
        <taxon>Gammaproteobacteria</taxon>
        <taxon>Enterobacterales</taxon>
        <taxon>Enterobacteriaceae</taxon>
        <taxon>Shigella</taxon>
    </lineage>
</organism>
<name>ERA_SHISS</name>
<proteinExistence type="inferred from homology"/>
<keyword id="KW-0997">Cell inner membrane</keyword>
<keyword id="KW-1003">Cell membrane</keyword>
<keyword id="KW-0963">Cytoplasm</keyword>
<keyword id="KW-0342">GTP-binding</keyword>
<keyword id="KW-0472">Membrane</keyword>
<keyword id="KW-0547">Nucleotide-binding</keyword>
<keyword id="KW-1185">Reference proteome</keyword>
<keyword id="KW-0690">Ribosome biogenesis</keyword>
<keyword id="KW-0694">RNA-binding</keyword>
<keyword id="KW-0699">rRNA-binding</keyword>
<protein>
    <recommendedName>
        <fullName evidence="1">GTPase Era</fullName>
    </recommendedName>
</protein>
<evidence type="ECO:0000255" key="1">
    <source>
        <dbReference type="HAMAP-Rule" id="MF_00367"/>
    </source>
</evidence>
<evidence type="ECO:0000255" key="2">
    <source>
        <dbReference type="PROSITE-ProRule" id="PRU01050"/>
    </source>
</evidence>
<gene>
    <name evidence="1" type="primary">era</name>
    <name type="ordered locus">SSON_2690</name>
</gene>
<accession>Q3YYV0</accession>
<feature type="chain" id="PRO_1000079738" description="GTPase Era">
    <location>
        <begin position="1"/>
        <end position="301"/>
    </location>
</feature>
<feature type="domain" description="Era-type G" evidence="2">
    <location>
        <begin position="7"/>
        <end position="175"/>
    </location>
</feature>
<feature type="domain" description="KH type-2" evidence="1">
    <location>
        <begin position="206"/>
        <end position="283"/>
    </location>
</feature>
<feature type="region of interest" description="G1" evidence="2">
    <location>
        <begin position="15"/>
        <end position="22"/>
    </location>
</feature>
<feature type="region of interest" description="G2" evidence="2">
    <location>
        <begin position="41"/>
        <end position="45"/>
    </location>
</feature>
<feature type="region of interest" description="G3" evidence="2">
    <location>
        <begin position="62"/>
        <end position="65"/>
    </location>
</feature>
<feature type="region of interest" description="G4" evidence="2">
    <location>
        <begin position="124"/>
        <end position="127"/>
    </location>
</feature>
<feature type="region of interest" description="G5" evidence="2">
    <location>
        <begin position="154"/>
        <end position="156"/>
    </location>
</feature>
<feature type="binding site" evidence="1">
    <location>
        <begin position="15"/>
        <end position="22"/>
    </location>
    <ligand>
        <name>GTP</name>
        <dbReference type="ChEBI" id="CHEBI:37565"/>
    </ligand>
</feature>
<feature type="binding site" evidence="1">
    <location>
        <begin position="62"/>
        <end position="66"/>
    </location>
    <ligand>
        <name>GTP</name>
        <dbReference type="ChEBI" id="CHEBI:37565"/>
    </ligand>
</feature>
<feature type="binding site" evidence="1">
    <location>
        <begin position="124"/>
        <end position="127"/>
    </location>
    <ligand>
        <name>GTP</name>
        <dbReference type="ChEBI" id="CHEBI:37565"/>
    </ligand>
</feature>